<keyword id="KW-0067">ATP-binding</keyword>
<keyword id="KW-0997">Cell inner membrane</keyword>
<keyword id="KW-1003">Cell membrane</keyword>
<keyword id="KW-0201">Cytochrome c-type biogenesis</keyword>
<keyword id="KW-0472">Membrane</keyword>
<keyword id="KW-0547">Nucleotide-binding</keyword>
<keyword id="KW-1185">Reference proteome</keyword>
<keyword id="KW-1278">Translocase</keyword>
<keyword id="KW-0813">Transport</keyword>
<proteinExistence type="inferred from homology"/>
<protein>
    <recommendedName>
        <fullName evidence="1">Cytochrome c biogenesis ATP-binding export protein CcmA</fullName>
        <ecNumber evidence="1">7.6.2.5</ecNumber>
    </recommendedName>
    <alternativeName>
        <fullName evidence="1">Heme exporter protein A</fullName>
    </alternativeName>
</protein>
<dbReference type="EC" id="7.6.2.5" evidence="1"/>
<dbReference type="EMBL" id="CP000127">
    <property type="protein sequence ID" value="ABA57459.1"/>
    <property type="molecule type" value="Genomic_DNA"/>
</dbReference>
<dbReference type="RefSeq" id="WP_002809040.1">
    <property type="nucleotide sequence ID" value="NC_007484.1"/>
</dbReference>
<dbReference type="SMR" id="Q3JCI7"/>
<dbReference type="FunCoup" id="Q3JCI7">
    <property type="interactions" value="141"/>
</dbReference>
<dbReference type="STRING" id="323261.Noc_0948"/>
<dbReference type="KEGG" id="noc:Noc_0948"/>
<dbReference type="eggNOG" id="COG4133">
    <property type="taxonomic scope" value="Bacteria"/>
</dbReference>
<dbReference type="HOGENOM" id="CLU_000604_1_2_6"/>
<dbReference type="InParanoid" id="Q3JCI7"/>
<dbReference type="Proteomes" id="UP000006838">
    <property type="component" value="Chromosome"/>
</dbReference>
<dbReference type="GO" id="GO:0005886">
    <property type="term" value="C:plasma membrane"/>
    <property type="evidence" value="ECO:0007669"/>
    <property type="project" value="UniProtKB-SubCell"/>
</dbReference>
<dbReference type="GO" id="GO:0015439">
    <property type="term" value="F:ABC-type heme transporter activity"/>
    <property type="evidence" value="ECO:0007669"/>
    <property type="project" value="UniProtKB-EC"/>
</dbReference>
<dbReference type="GO" id="GO:0005524">
    <property type="term" value="F:ATP binding"/>
    <property type="evidence" value="ECO:0007669"/>
    <property type="project" value="UniProtKB-KW"/>
</dbReference>
<dbReference type="GO" id="GO:0016887">
    <property type="term" value="F:ATP hydrolysis activity"/>
    <property type="evidence" value="ECO:0007669"/>
    <property type="project" value="InterPro"/>
</dbReference>
<dbReference type="GO" id="GO:0017004">
    <property type="term" value="P:cytochrome complex assembly"/>
    <property type="evidence" value="ECO:0007669"/>
    <property type="project" value="UniProtKB-KW"/>
</dbReference>
<dbReference type="Gene3D" id="3.40.50.300">
    <property type="entry name" value="P-loop containing nucleotide triphosphate hydrolases"/>
    <property type="match status" value="1"/>
</dbReference>
<dbReference type="InterPro" id="IPR003593">
    <property type="entry name" value="AAA+_ATPase"/>
</dbReference>
<dbReference type="InterPro" id="IPR003439">
    <property type="entry name" value="ABC_transporter-like_ATP-bd"/>
</dbReference>
<dbReference type="InterPro" id="IPR017871">
    <property type="entry name" value="ABC_transporter-like_CS"/>
</dbReference>
<dbReference type="InterPro" id="IPR005895">
    <property type="entry name" value="ABC_transptr_haem_export_CcmA"/>
</dbReference>
<dbReference type="InterPro" id="IPR027417">
    <property type="entry name" value="P-loop_NTPase"/>
</dbReference>
<dbReference type="NCBIfam" id="TIGR01189">
    <property type="entry name" value="ccmA"/>
    <property type="match status" value="1"/>
</dbReference>
<dbReference type="NCBIfam" id="NF010061">
    <property type="entry name" value="PRK13538.1"/>
    <property type="match status" value="1"/>
</dbReference>
<dbReference type="PANTHER" id="PTHR43499">
    <property type="entry name" value="ABC TRANSPORTER I FAMILY MEMBER 1"/>
    <property type="match status" value="1"/>
</dbReference>
<dbReference type="PANTHER" id="PTHR43499:SF1">
    <property type="entry name" value="ABC TRANSPORTER I FAMILY MEMBER 1"/>
    <property type="match status" value="1"/>
</dbReference>
<dbReference type="Pfam" id="PF00005">
    <property type="entry name" value="ABC_tran"/>
    <property type="match status" value="1"/>
</dbReference>
<dbReference type="SMART" id="SM00382">
    <property type="entry name" value="AAA"/>
    <property type="match status" value="1"/>
</dbReference>
<dbReference type="SUPFAM" id="SSF52540">
    <property type="entry name" value="P-loop containing nucleoside triphosphate hydrolases"/>
    <property type="match status" value="1"/>
</dbReference>
<dbReference type="PROSITE" id="PS00211">
    <property type="entry name" value="ABC_TRANSPORTER_1"/>
    <property type="match status" value="1"/>
</dbReference>
<dbReference type="PROSITE" id="PS50893">
    <property type="entry name" value="ABC_TRANSPORTER_2"/>
    <property type="match status" value="1"/>
</dbReference>
<dbReference type="PROSITE" id="PS51243">
    <property type="entry name" value="CCMA"/>
    <property type="match status" value="1"/>
</dbReference>
<evidence type="ECO:0000255" key="1">
    <source>
        <dbReference type="HAMAP-Rule" id="MF_01707"/>
    </source>
</evidence>
<feature type="chain" id="PRO_0000271936" description="Cytochrome c biogenesis ATP-binding export protein CcmA">
    <location>
        <begin position="1"/>
        <end position="216"/>
    </location>
</feature>
<feature type="domain" description="ABC transporter" evidence="1">
    <location>
        <begin position="18"/>
        <end position="216"/>
    </location>
</feature>
<feature type="binding site" evidence="1">
    <location>
        <begin position="50"/>
        <end position="57"/>
    </location>
    <ligand>
        <name>ATP</name>
        <dbReference type="ChEBI" id="CHEBI:30616"/>
    </ligand>
</feature>
<comment type="function">
    <text evidence="1">Part of the ABC transporter complex CcmAB involved in the biogenesis of c-type cytochromes; once thought to export heme, this seems not to be the case, but its exact role is uncertain. Responsible for energy coupling to the transport system.</text>
</comment>
<comment type="catalytic activity">
    <reaction evidence="1">
        <text>heme b(in) + ATP + H2O = heme b(out) + ADP + phosphate + H(+)</text>
        <dbReference type="Rhea" id="RHEA:19261"/>
        <dbReference type="ChEBI" id="CHEBI:15377"/>
        <dbReference type="ChEBI" id="CHEBI:15378"/>
        <dbReference type="ChEBI" id="CHEBI:30616"/>
        <dbReference type="ChEBI" id="CHEBI:43474"/>
        <dbReference type="ChEBI" id="CHEBI:60344"/>
        <dbReference type="ChEBI" id="CHEBI:456216"/>
        <dbReference type="EC" id="7.6.2.5"/>
    </reaction>
</comment>
<comment type="subunit">
    <text evidence="1">The complex is composed of two ATP-binding proteins (CcmA) and two transmembrane proteins (CcmB).</text>
</comment>
<comment type="subcellular location">
    <subcellularLocation>
        <location evidence="1">Cell inner membrane</location>
        <topology evidence="1">Peripheral membrane protein</topology>
    </subcellularLocation>
</comment>
<comment type="similarity">
    <text evidence="1">Belongs to the ABC transporter superfamily. CcmA exporter (TC 3.A.1.107) family.</text>
</comment>
<name>CCMA_NITOC</name>
<organism>
    <name type="scientific">Nitrosococcus oceani (strain ATCC 19707 / BCRC 17464 / JCM 30415 / NCIMB 11848 / C-107)</name>
    <dbReference type="NCBI Taxonomy" id="323261"/>
    <lineage>
        <taxon>Bacteria</taxon>
        <taxon>Pseudomonadati</taxon>
        <taxon>Pseudomonadota</taxon>
        <taxon>Gammaproteobacteria</taxon>
        <taxon>Chromatiales</taxon>
        <taxon>Chromatiaceae</taxon>
        <taxon>Nitrosococcus</taxon>
    </lineage>
</organism>
<gene>
    <name evidence="1" type="primary">ccmA</name>
    <name type="ordered locus">Noc_0948</name>
</gene>
<sequence length="216" mass="23734">MGKDNKKQTMLDQAQPRLQVEGLAGRRGERLLFKNMNFTVDMGEVLEVSGHNGSGKTTLLRLLCGLLLPEEGTLQWRGQPINKIRPLYHSELSYVGHTDAIKGELTAHENLMIAGALNGGGIDPEQALERVGLTTIRELPGRFLSAGQRRRLALARLLVNRAWLWLLDEPFTALDKVAIRTIATLLEEHAAAGGIAIFTSHHAINIAHARTLEISA</sequence>
<reference key="1">
    <citation type="journal article" date="2006" name="Appl. Environ. Microbiol.">
        <title>Complete genome sequence of the marine, chemolithoautotrophic, ammonia-oxidizing bacterium Nitrosococcus oceani ATCC 19707.</title>
        <authorList>
            <person name="Klotz M.G."/>
            <person name="Arp D.J."/>
            <person name="Chain P.S.G."/>
            <person name="El-Sheikh A.F."/>
            <person name="Hauser L.J."/>
            <person name="Hommes N.G."/>
            <person name="Larimer F.W."/>
            <person name="Malfatti S.A."/>
            <person name="Norton J.M."/>
            <person name="Poret-Peterson A.T."/>
            <person name="Vergez L.M."/>
            <person name="Ward B.B."/>
        </authorList>
    </citation>
    <scope>NUCLEOTIDE SEQUENCE [LARGE SCALE GENOMIC DNA]</scope>
    <source>
        <strain>ATCC 19707 / BCRC 17464 / JCM 30415 / NCIMB 11848 / C-107</strain>
    </source>
</reference>
<accession>Q3JCI7</accession>